<protein>
    <recommendedName>
        <fullName>Pre-mRNA-splicing factor 18</fullName>
    </recommendedName>
    <alternativeName>
        <fullName>PRP18 homolog</fullName>
    </alternativeName>
</protein>
<sequence>MDILKSEILRKRQLVEDRNLLVENKKYFKRSELARKEEEAYYERCGYKIQPKEDDQKPLTSSNPVLELELAEEKLPMTLSRQEVIRRLRERGEPIRLFGETDYDAFQRLRKIEILTPEVNKGLRNDLKAALDKIDQQYLNEIVGGQEPGEEDTQNDLKVHEENTTIEELEALGESLGKGDDHKDMDIITKFLKFLLGVWAKELNAREDYVKRSVQGKLNSATQKQTESYLRPLFRKLRKRNLPADIKESITDIIKFMLQREYVKANDAYLQMAIGNAPWPIGVTMVGIHARTGREKIFSKHVAHVLNDETQRKYIQGLKRLMTICQKHFPTDPSKCVEYNAL</sequence>
<accession>Q8BM39</accession>
<accession>Q3UX46</accession>
<accession>Q8BZ54</accession>
<name>PRP18_MOUSE</name>
<reference key="1">
    <citation type="journal article" date="2005" name="Science">
        <title>The transcriptional landscape of the mammalian genome.</title>
        <authorList>
            <person name="Carninci P."/>
            <person name="Kasukawa T."/>
            <person name="Katayama S."/>
            <person name="Gough J."/>
            <person name="Frith M.C."/>
            <person name="Maeda N."/>
            <person name="Oyama R."/>
            <person name="Ravasi T."/>
            <person name="Lenhard B."/>
            <person name="Wells C."/>
            <person name="Kodzius R."/>
            <person name="Shimokawa K."/>
            <person name="Bajic V.B."/>
            <person name="Brenner S.E."/>
            <person name="Batalov S."/>
            <person name="Forrest A.R."/>
            <person name="Zavolan M."/>
            <person name="Davis M.J."/>
            <person name="Wilming L.G."/>
            <person name="Aidinis V."/>
            <person name="Allen J.E."/>
            <person name="Ambesi-Impiombato A."/>
            <person name="Apweiler R."/>
            <person name="Aturaliya R.N."/>
            <person name="Bailey T.L."/>
            <person name="Bansal M."/>
            <person name="Baxter L."/>
            <person name="Beisel K.W."/>
            <person name="Bersano T."/>
            <person name="Bono H."/>
            <person name="Chalk A.M."/>
            <person name="Chiu K.P."/>
            <person name="Choudhary V."/>
            <person name="Christoffels A."/>
            <person name="Clutterbuck D.R."/>
            <person name="Crowe M.L."/>
            <person name="Dalla E."/>
            <person name="Dalrymple B.P."/>
            <person name="de Bono B."/>
            <person name="Della Gatta G."/>
            <person name="di Bernardo D."/>
            <person name="Down T."/>
            <person name="Engstrom P."/>
            <person name="Fagiolini M."/>
            <person name="Faulkner G."/>
            <person name="Fletcher C.F."/>
            <person name="Fukushima T."/>
            <person name="Furuno M."/>
            <person name="Futaki S."/>
            <person name="Gariboldi M."/>
            <person name="Georgii-Hemming P."/>
            <person name="Gingeras T.R."/>
            <person name="Gojobori T."/>
            <person name="Green R.E."/>
            <person name="Gustincich S."/>
            <person name="Harbers M."/>
            <person name="Hayashi Y."/>
            <person name="Hensch T.K."/>
            <person name="Hirokawa N."/>
            <person name="Hill D."/>
            <person name="Huminiecki L."/>
            <person name="Iacono M."/>
            <person name="Ikeo K."/>
            <person name="Iwama A."/>
            <person name="Ishikawa T."/>
            <person name="Jakt M."/>
            <person name="Kanapin A."/>
            <person name="Katoh M."/>
            <person name="Kawasawa Y."/>
            <person name="Kelso J."/>
            <person name="Kitamura H."/>
            <person name="Kitano H."/>
            <person name="Kollias G."/>
            <person name="Krishnan S.P."/>
            <person name="Kruger A."/>
            <person name="Kummerfeld S.K."/>
            <person name="Kurochkin I.V."/>
            <person name="Lareau L.F."/>
            <person name="Lazarevic D."/>
            <person name="Lipovich L."/>
            <person name="Liu J."/>
            <person name="Liuni S."/>
            <person name="McWilliam S."/>
            <person name="Madan Babu M."/>
            <person name="Madera M."/>
            <person name="Marchionni L."/>
            <person name="Matsuda H."/>
            <person name="Matsuzawa S."/>
            <person name="Miki H."/>
            <person name="Mignone F."/>
            <person name="Miyake S."/>
            <person name="Morris K."/>
            <person name="Mottagui-Tabar S."/>
            <person name="Mulder N."/>
            <person name="Nakano N."/>
            <person name="Nakauchi H."/>
            <person name="Ng P."/>
            <person name="Nilsson R."/>
            <person name="Nishiguchi S."/>
            <person name="Nishikawa S."/>
            <person name="Nori F."/>
            <person name="Ohara O."/>
            <person name="Okazaki Y."/>
            <person name="Orlando V."/>
            <person name="Pang K.C."/>
            <person name="Pavan W.J."/>
            <person name="Pavesi G."/>
            <person name="Pesole G."/>
            <person name="Petrovsky N."/>
            <person name="Piazza S."/>
            <person name="Reed J."/>
            <person name="Reid J.F."/>
            <person name="Ring B.Z."/>
            <person name="Ringwald M."/>
            <person name="Rost B."/>
            <person name="Ruan Y."/>
            <person name="Salzberg S.L."/>
            <person name="Sandelin A."/>
            <person name="Schneider C."/>
            <person name="Schoenbach C."/>
            <person name="Sekiguchi K."/>
            <person name="Semple C.A."/>
            <person name="Seno S."/>
            <person name="Sessa L."/>
            <person name="Sheng Y."/>
            <person name="Shibata Y."/>
            <person name="Shimada H."/>
            <person name="Shimada K."/>
            <person name="Silva D."/>
            <person name="Sinclair B."/>
            <person name="Sperling S."/>
            <person name="Stupka E."/>
            <person name="Sugiura K."/>
            <person name="Sultana R."/>
            <person name="Takenaka Y."/>
            <person name="Taki K."/>
            <person name="Tammoja K."/>
            <person name="Tan S.L."/>
            <person name="Tang S."/>
            <person name="Taylor M.S."/>
            <person name="Tegner J."/>
            <person name="Teichmann S.A."/>
            <person name="Ueda H.R."/>
            <person name="van Nimwegen E."/>
            <person name="Verardo R."/>
            <person name="Wei C.L."/>
            <person name="Yagi K."/>
            <person name="Yamanishi H."/>
            <person name="Zabarovsky E."/>
            <person name="Zhu S."/>
            <person name="Zimmer A."/>
            <person name="Hide W."/>
            <person name="Bult C."/>
            <person name="Grimmond S.M."/>
            <person name="Teasdale R.D."/>
            <person name="Liu E.T."/>
            <person name="Brusic V."/>
            <person name="Quackenbush J."/>
            <person name="Wahlestedt C."/>
            <person name="Mattick J.S."/>
            <person name="Hume D.A."/>
            <person name="Kai C."/>
            <person name="Sasaki D."/>
            <person name="Tomaru Y."/>
            <person name="Fukuda S."/>
            <person name="Kanamori-Katayama M."/>
            <person name="Suzuki M."/>
            <person name="Aoki J."/>
            <person name="Arakawa T."/>
            <person name="Iida J."/>
            <person name="Imamura K."/>
            <person name="Itoh M."/>
            <person name="Kato T."/>
            <person name="Kawaji H."/>
            <person name="Kawagashira N."/>
            <person name="Kawashima T."/>
            <person name="Kojima M."/>
            <person name="Kondo S."/>
            <person name="Konno H."/>
            <person name="Nakano K."/>
            <person name="Ninomiya N."/>
            <person name="Nishio T."/>
            <person name="Okada M."/>
            <person name="Plessy C."/>
            <person name="Shibata K."/>
            <person name="Shiraki T."/>
            <person name="Suzuki S."/>
            <person name="Tagami M."/>
            <person name="Waki K."/>
            <person name="Watahiki A."/>
            <person name="Okamura-Oho Y."/>
            <person name="Suzuki H."/>
            <person name="Kawai J."/>
            <person name="Hayashizaki Y."/>
        </authorList>
    </citation>
    <scope>NUCLEOTIDE SEQUENCE [LARGE SCALE MRNA] (ISOFORMS 1 AND 2)</scope>
    <source>
        <strain>C57BL/6J</strain>
        <tissue>Bone</tissue>
        <tissue>Egg</tissue>
        <tissue>Embryo</tissue>
    </source>
</reference>
<reference key="2">
    <citation type="journal article" date="2004" name="Genome Res.">
        <title>The status, quality, and expansion of the NIH full-length cDNA project: the Mammalian Gene Collection (MGC).</title>
        <authorList>
            <consortium name="The MGC Project Team"/>
        </authorList>
    </citation>
    <scope>NUCLEOTIDE SEQUENCE [LARGE SCALE MRNA] (ISOFORM 1)</scope>
    <source>
        <strain>FVB/N</strain>
        <tissue>Brain</tissue>
        <tissue>Mammary gland</tissue>
    </source>
</reference>
<reference key="3">
    <citation type="journal article" date="2010" name="Cell">
        <title>A tissue-specific atlas of mouse protein phosphorylation and expression.</title>
        <authorList>
            <person name="Huttlin E.L."/>
            <person name="Jedrychowski M.P."/>
            <person name="Elias J.E."/>
            <person name="Goswami T."/>
            <person name="Rad R."/>
            <person name="Beausoleil S.A."/>
            <person name="Villen J."/>
            <person name="Haas W."/>
            <person name="Sowa M.E."/>
            <person name="Gygi S.P."/>
        </authorList>
    </citation>
    <scope>IDENTIFICATION BY MASS SPECTROMETRY [LARGE SCALE ANALYSIS]</scope>
    <source>
        <tissue>Spleen</tissue>
    </source>
</reference>
<organism>
    <name type="scientific">Mus musculus</name>
    <name type="common">Mouse</name>
    <dbReference type="NCBI Taxonomy" id="10090"/>
    <lineage>
        <taxon>Eukaryota</taxon>
        <taxon>Metazoa</taxon>
        <taxon>Chordata</taxon>
        <taxon>Craniata</taxon>
        <taxon>Vertebrata</taxon>
        <taxon>Euteleostomi</taxon>
        <taxon>Mammalia</taxon>
        <taxon>Eutheria</taxon>
        <taxon>Euarchontoglires</taxon>
        <taxon>Glires</taxon>
        <taxon>Rodentia</taxon>
        <taxon>Myomorpha</taxon>
        <taxon>Muroidea</taxon>
        <taxon>Muridae</taxon>
        <taxon>Murinae</taxon>
        <taxon>Mus</taxon>
        <taxon>Mus</taxon>
    </lineage>
</organism>
<gene>
    <name type="primary">Prpf18</name>
    <name type="synonym">Prp18</name>
</gene>
<proteinExistence type="evidence at protein level"/>
<dbReference type="EMBL" id="AK035073">
    <property type="protein sequence ID" value="BAC28933.1"/>
    <property type="molecule type" value="mRNA"/>
</dbReference>
<dbReference type="EMBL" id="AK036668">
    <property type="protein sequence ID" value="BAC29527.1"/>
    <property type="status" value="ALT_SEQ"/>
    <property type="molecule type" value="mRNA"/>
</dbReference>
<dbReference type="EMBL" id="AK135707">
    <property type="protein sequence ID" value="BAE22619.1"/>
    <property type="molecule type" value="mRNA"/>
</dbReference>
<dbReference type="EMBL" id="AK135890">
    <property type="protein sequence ID" value="BAE22717.1"/>
    <property type="molecule type" value="mRNA"/>
</dbReference>
<dbReference type="EMBL" id="AK139720">
    <property type="protein sequence ID" value="BAE24112.1"/>
    <property type="molecule type" value="mRNA"/>
</dbReference>
<dbReference type="EMBL" id="BC004573">
    <property type="protein sequence ID" value="AAH04573.1"/>
    <property type="molecule type" value="mRNA"/>
</dbReference>
<dbReference type="EMBL" id="BC058631">
    <property type="protein sequence ID" value="AAH58631.1"/>
    <property type="molecule type" value="mRNA"/>
</dbReference>
<dbReference type="CCDS" id="CCDS15657.1">
    <molecule id="Q8BM39-1"/>
</dbReference>
<dbReference type="RefSeq" id="NP_080321.2">
    <molecule id="Q8BM39-1"/>
    <property type="nucleotide sequence ID" value="NM_026045.3"/>
</dbReference>
<dbReference type="BMRB" id="Q8BM39"/>
<dbReference type="SMR" id="Q8BM39"/>
<dbReference type="BioGRID" id="212033">
    <property type="interactions" value="23"/>
</dbReference>
<dbReference type="FunCoup" id="Q8BM39">
    <property type="interactions" value="2671"/>
</dbReference>
<dbReference type="STRING" id="10090.ENSMUSP00000041428"/>
<dbReference type="iPTMnet" id="Q8BM39"/>
<dbReference type="PhosphoSitePlus" id="Q8BM39"/>
<dbReference type="PaxDb" id="10090-ENSMUSP00000041428"/>
<dbReference type="PeptideAtlas" id="Q8BM39"/>
<dbReference type="ProteomicsDB" id="291664">
    <molecule id="Q8BM39-1"/>
</dbReference>
<dbReference type="ProteomicsDB" id="291665">
    <molecule id="Q8BM39-2"/>
</dbReference>
<dbReference type="Pumba" id="Q8BM39"/>
<dbReference type="DNASU" id="67229"/>
<dbReference type="Ensembl" id="ENSMUST00000035721.14">
    <molecule id="Q8BM39-1"/>
    <property type="protein sequence ID" value="ENSMUSP00000041428.8"/>
    <property type="gene ID" value="ENSMUSG00000039449.15"/>
</dbReference>
<dbReference type="Ensembl" id="ENSMUST00000152362.7">
    <molecule id="Q8BM39-1"/>
    <property type="protein sequence ID" value="ENSMUSP00000116495.2"/>
    <property type="gene ID" value="ENSMUSG00000039449.15"/>
</dbReference>
<dbReference type="GeneID" id="67229"/>
<dbReference type="KEGG" id="mmu:67229"/>
<dbReference type="UCSC" id="uc008iex.1">
    <molecule id="Q8BM39-1"/>
    <property type="organism name" value="mouse"/>
</dbReference>
<dbReference type="AGR" id="MGI:1914479"/>
<dbReference type="CTD" id="8559"/>
<dbReference type="MGI" id="MGI:1914479">
    <property type="gene designation" value="Prpf18"/>
</dbReference>
<dbReference type="VEuPathDB" id="HostDB:ENSMUSG00000039449"/>
<dbReference type="eggNOG" id="KOG2808">
    <property type="taxonomic scope" value="Eukaryota"/>
</dbReference>
<dbReference type="GeneTree" id="ENSGT00390000015073"/>
<dbReference type="HOGENOM" id="CLU_039675_0_1_1"/>
<dbReference type="InParanoid" id="Q8BM39"/>
<dbReference type="OMA" id="SFAQVRW"/>
<dbReference type="OrthoDB" id="10261918at2759"/>
<dbReference type="PhylomeDB" id="Q8BM39"/>
<dbReference type="TreeFam" id="TF315049"/>
<dbReference type="Reactome" id="R-MMU-72163">
    <property type="pathway name" value="mRNA Splicing - Major Pathway"/>
</dbReference>
<dbReference type="BioGRID-ORCS" id="67229">
    <property type="hits" value="12 hits in 76 CRISPR screens"/>
</dbReference>
<dbReference type="ChiTaRS" id="Prpf18">
    <property type="organism name" value="mouse"/>
</dbReference>
<dbReference type="PRO" id="PR:Q8BM39"/>
<dbReference type="Proteomes" id="UP000000589">
    <property type="component" value="Chromosome 2"/>
</dbReference>
<dbReference type="RNAct" id="Q8BM39">
    <property type="molecule type" value="protein"/>
</dbReference>
<dbReference type="Bgee" id="ENSMUSG00000039449">
    <property type="expression patterns" value="Expressed in ear vesicle and 248 other cell types or tissues"/>
</dbReference>
<dbReference type="ExpressionAtlas" id="Q8BM39">
    <property type="expression patterns" value="baseline and differential"/>
</dbReference>
<dbReference type="GO" id="GO:0016607">
    <property type="term" value="C:nuclear speck"/>
    <property type="evidence" value="ECO:0007669"/>
    <property type="project" value="UniProtKB-SubCell"/>
</dbReference>
<dbReference type="GO" id="GO:0005681">
    <property type="term" value="C:spliceosomal complex"/>
    <property type="evidence" value="ECO:0007669"/>
    <property type="project" value="UniProtKB-KW"/>
</dbReference>
<dbReference type="GO" id="GO:0006397">
    <property type="term" value="P:mRNA processing"/>
    <property type="evidence" value="ECO:0007669"/>
    <property type="project" value="UniProtKB-KW"/>
</dbReference>
<dbReference type="GO" id="GO:0008380">
    <property type="term" value="P:RNA splicing"/>
    <property type="evidence" value="ECO:0007669"/>
    <property type="project" value="UniProtKB-KW"/>
</dbReference>
<dbReference type="FunFam" id="1.20.940.10:FF:000002">
    <property type="entry name" value="Pre-mRNA processing factor 18"/>
    <property type="match status" value="1"/>
</dbReference>
<dbReference type="FunFam" id="4.10.280.110:FF:000001">
    <property type="entry name" value="pre-mRNA-splicing factor 18 isoform X2"/>
    <property type="match status" value="1"/>
</dbReference>
<dbReference type="Gene3D" id="1.20.940.10">
    <property type="entry name" value="Functional domain of the splicing factor Prp18"/>
    <property type="match status" value="1"/>
</dbReference>
<dbReference type="Gene3D" id="4.10.280.110">
    <property type="entry name" value="Pre-mRNA processing factor 4 domain"/>
    <property type="match status" value="1"/>
</dbReference>
<dbReference type="InterPro" id="IPR004098">
    <property type="entry name" value="Prp18"/>
</dbReference>
<dbReference type="InterPro" id="IPR014906">
    <property type="entry name" value="PRP4-like"/>
</dbReference>
<dbReference type="InterPro" id="IPR036285">
    <property type="entry name" value="PRP4-like_sf"/>
</dbReference>
<dbReference type="InterPro" id="IPR039979">
    <property type="entry name" value="PRPF18"/>
</dbReference>
<dbReference type="PANTHER" id="PTHR13007">
    <property type="entry name" value="PRE-MRNA SPLICING FACTOR-RELATED"/>
    <property type="match status" value="1"/>
</dbReference>
<dbReference type="PANTHER" id="PTHR13007:SF19">
    <property type="entry name" value="PRE-MRNA-SPLICING FACTOR 18"/>
    <property type="match status" value="1"/>
</dbReference>
<dbReference type="Pfam" id="PF02840">
    <property type="entry name" value="Prp18"/>
    <property type="match status" value="1"/>
</dbReference>
<dbReference type="Pfam" id="PF08799">
    <property type="entry name" value="PRP4"/>
    <property type="match status" value="1"/>
</dbReference>
<dbReference type="SMART" id="SM00500">
    <property type="entry name" value="SFM"/>
    <property type="match status" value="1"/>
</dbReference>
<dbReference type="SUPFAM" id="SSF47938">
    <property type="entry name" value="Functional domain of the splicing factor Prp18"/>
    <property type="match status" value="1"/>
</dbReference>
<dbReference type="SUPFAM" id="SSF158230">
    <property type="entry name" value="PRP4-like"/>
    <property type="match status" value="1"/>
</dbReference>
<comment type="function">
    <text evidence="1">Participates in the second step of pre-mRNA splicing.</text>
</comment>
<comment type="subunit">
    <text evidence="1">Heterodimer with PPIH. Interacts with PRPF4 and with the spliceosome. Part of a complex containing U4/U6 snRNPs (By similarity).</text>
</comment>
<comment type="subcellular location">
    <subcellularLocation>
        <location evidence="1">Nucleus speckle</location>
    </subcellularLocation>
    <text evidence="1">Colocalizes with spliceosomal snRNPs.</text>
</comment>
<comment type="alternative products">
    <event type="alternative splicing"/>
    <isoform>
        <id>Q8BM39-1</id>
        <name>1</name>
        <sequence type="displayed"/>
    </isoform>
    <isoform>
        <id>Q8BM39-2</id>
        <name>2</name>
        <sequence type="described" ref="VSP_008329 VSP_008330"/>
    </isoform>
</comment>
<comment type="miscellaneous">
    <molecule>Isoform 2</molecule>
    <text evidence="4">May be due to an intron retention.</text>
</comment>
<comment type="similarity">
    <text evidence="4">Belongs to the PRP18 family.</text>
</comment>
<comment type="sequence caution" evidence="4">
    <conflict type="miscellaneous discrepancy">
        <sequence resource="EMBL-CDS" id="BAC29527"/>
    </conflict>
    <text>Intron retention.</text>
</comment>
<feature type="chain" id="PRO_0000058583" description="Pre-mRNA-splicing factor 18">
    <location>
        <begin position="1"/>
        <end position="342"/>
    </location>
</feature>
<feature type="modified residue" description="N-acetylmethionine" evidence="2">
    <location>
        <position position="1"/>
    </location>
</feature>
<feature type="splice variant" id="VSP_008329" description="In isoform 2." evidence="3">
    <original>ALGES</original>
    <variation>VVYPP</variation>
    <location>
        <begin position="171"/>
        <end position="175"/>
    </location>
</feature>
<feature type="splice variant" id="VSP_008330" description="In isoform 2." evidence="3">
    <location>
        <begin position="176"/>
        <end position="342"/>
    </location>
</feature>
<feature type="sequence conflict" description="In Ref. 1; BAC29527." evidence="4" ref="1">
    <original>A</original>
    <variation>V</variation>
    <location>
        <position position="244"/>
    </location>
</feature>
<evidence type="ECO:0000250" key="1"/>
<evidence type="ECO:0000250" key="2">
    <source>
        <dbReference type="UniProtKB" id="Q99633"/>
    </source>
</evidence>
<evidence type="ECO:0000303" key="3">
    <source>
    </source>
</evidence>
<evidence type="ECO:0000305" key="4"/>
<keyword id="KW-0007">Acetylation</keyword>
<keyword id="KW-0025">Alternative splicing</keyword>
<keyword id="KW-0507">mRNA processing</keyword>
<keyword id="KW-0508">mRNA splicing</keyword>
<keyword id="KW-0539">Nucleus</keyword>
<keyword id="KW-1185">Reference proteome</keyword>
<keyword id="KW-0747">Spliceosome</keyword>